<name>MED1_PONAB</name>
<gene>
    <name type="primary">MED1</name>
    <name type="synonym">PPARBP</name>
    <name type="synonym">TRAP220</name>
</gene>
<feature type="chain" id="PRO_0000302019" description="Mediator of RNA polymerase II transcription subunit 1">
    <location>
        <begin position="1"/>
        <end position="1581"/>
    </location>
</feature>
<feature type="region of interest" description="Interaction with the Mediator complex and THRA" evidence="1">
    <location>
        <begin position="1"/>
        <end position="670"/>
    </location>
</feature>
<feature type="region of interest" description="Interaction with ESR1" evidence="2">
    <location>
        <begin position="16"/>
        <end position="590"/>
    </location>
</feature>
<feature type="region of interest" description="Interaction with the Mediator complex" evidence="1">
    <location>
        <begin position="108"/>
        <end position="212"/>
    </location>
</feature>
<feature type="region of interest" description="Interaction with the Mediator complex" evidence="1">
    <location>
        <begin position="215"/>
        <end position="390"/>
    </location>
</feature>
<feature type="region of interest" description="Interaction with THRA" evidence="1">
    <location>
        <begin position="405"/>
        <end position="644"/>
    </location>
</feature>
<feature type="region of interest" description="Interaction with VDR" evidence="1">
    <location>
        <begin position="542"/>
        <end position="788"/>
    </location>
</feature>
<feature type="region of interest" description="Disordered" evidence="4">
    <location>
        <begin position="609"/>
        <end position="705"/>
    </location>
</feature>
<feature type="region of interest" description="Interaction with PPARGC1A and THRA" evidence="1">
    <location>
        <begin position="622"/>
        <end position="701"/>
    </location>
</feature>
<feature type="region of interest" description="Interaction with ESR1" evidence="1">
    <location>
        <begin position="656"/>
        <end position="1065"/>
    </location>
</feature>
<feature type="region of interest" description="Interaction with GATA1" evidence="2">
    <location>
        <begin position="681"/>
        <end position="715"/>
    </location>
</feature>
<feature type="region of interest" description="Disordered" evidence="4">
    <location>
        <begin position="791"/>
        <end position="819"/>
    </location>
</feature>
<feature type="region of interest" description="Disordered" evidence="4">
    <location>
        <begin position="868"/>
        <end position="895"/>
    </location>
</feature>
<feature type="region of interest" description="Disordered" evidence="4">
    <location>
        <begin position="947"/>
        <end position="1566"/>
    </location>
</feature>
<feature type="region of interest" description="Interaction with TP53" evidence="1">
    <location>
        <begin position="1249"/>
        <end position="1421"/>
    </location>
</feature>
<feature type="short sequence motif" description="LXXLL motif 1">
    <location>
        <begin position="604"/>
        <end position="608"/>
    </location>
</feature>
<feature type="short sequence motif" description="LXXLL motif 2">
    <location>
        <begin position="645"/>
        <end position="649"/>
    </location>
</feature>
<feature type="short sequence motif" description="Integrase domain-binding motif (IBM)" evidence="2">
    <location>
        <begin position="874"/>
        <end position="901"/>
    </location>
</feature>
<feature type="compositionally biased region" description="Pro residues" evidence="4">
    <location>
        <begin position="622"/>
        <end position="632"/>
    </location>
</feature>
<feature type="compositionally biased region" description="Polar residues" evidence="4">
    <location>
        <begin position="655"/>
        <end position="675"/>
    </location>
</feature>
<feature type="compositionally biased region" description="Basic and acidic residues" evidence="4">
    <location>
        <begin position="690"/>
        <end position="705"/>
    </location>
</feature>
<feature type="compositionally biased region" description="Polar residues" evidence="4">
    <location>
        <begin position="807"/>
        <end position="819"/>
    </location>
</feature>
<feature type="compositionally biased region" description="Basic and acidic residues" evidence="4">
    <location>
        <begin position="962"/>
        <end position="973"/>
    </location>
</feature>
<feature type="compositionally biased region" description="Low complexity" evidence="4">
    <location>
        <begin position="1033"/>
        <end position="1050"/>
    </location>
</feature>
<feature type="compositionally biased region" description="Low complexity" evidence="4">
    <location>
        <begin position="1077"/>
        <end position="1093"/>
    </location>
</feature>
<feature type="compositionally biased region" description="Low complexity" evidence="4">
    <location>
        <begin position="1100"/>
        <end position="1111"/>
    </location>
</feature>
<feature type="compositionally biased region" description="Low complexity" evidence="4">
    <location>
        <begin position="1119"/>
        <end position="1156"/>
    </location>
</feature>
<feature type="compositionally biased region" description="Polar residues" evidence="4">
    <location>
        <begin position="1162"/>
        <end position="1195"/>
    </location>
</feature>
<feature type="compositionally biased region" description="Low complexity" evidence="4">
    <location>
        <begin position="1218"/>
        <end position="1227"/>
    </location>
</feature>
<feature type="compositionally biased region" description="Low complexity" evidence="4">
    <location>
        <begin position="1234"/>
        <end position="1293"/>
    </location>
</feature>
<feature type="compositionally biased region" description="Polar residues" evidence="4">
    <location>
        <begin position="1330"/>
        <end position="1345"/>
    </location>
</feature>
<feature type="compositionally biased region" description="Basic and acidic residues" evidence="4">
    <location>
        <begin position="1352"/>
        <end position="1364"/>
    </location>
</feature>
<feature type="compositionally biased region" description="Polar residues" evidence="4">
    <location>
        <begin position="1425"/>
        <end position="1440"/>
    </location>
</feature>
<feature type="compositionally biased region" description="Polar residues" evidence="4">
    <location>
        <begin position="1448"/>
        <end position="1482"/>
    </location>
</feature>
<feature type="compositionally biased region" description="Basic residues" evidence="4">
    <location>
        <begin position="1496"/>
        <end position="1505"/>
    </location>
</feature>
<feature type="compositionally biased region" description="Basic and acidic residues" evidence="4">
    <location>
        <begin position="1506"/>
        <end position="1522"/>
    </location>
</feature>
<feature type="compositionally biased region" description="Polar residues" evidence="4">
    <location>
        <begin position="1533"/>
        <end position="1552"/>
    </location>
</feature>
<feature type="modified residue" description="Phosphoserine" evidence="2">
    <location>
        <position position="588"/>
    </location>
</feature>
<feature type="modified residue" description="Phosphoserine" evidence="2">
    <location>
        <position position="664"/>
    </location>
</feature>
<feature type="modified residue" description="Phosphoserine" evidence="2">
    <location>
        <position position="794"/>
    </location>
</feature>
<feature type="modified residue" description="Phosphothreonine" evidence="2">
    <location>
        <position position="804"/>
    </location>
</feature>
<feature type="modified residue" description="Phosphoserine" evidence="2">
    <location>
        <position position="886"/>
    </location>
</feature>
<feature type="modified residue" description="Phosphoserine" evidence="3">
    <location>
        <position position="952"/>
    </location>
</feature>
<feature type="modified residue" description="Phosphothreonine; by MAPK1 or MAPK3" evidence="2">
    <location>
        <position position="1031"/>
    </location>
</feature>
<feature type="modified residue" description="Phosphothreonine" evidence="2">
    <location>
        <position position="1050"/>
    </location>
</feature>
<feature type="modified residue" description="Phosphothreonine" evidence="2">
    <location>
        <position position="1056"/>
    </location>
</feature>
<feature type="modified residue" description="Phosphoserine" evidence="2">
    <location>
        <position position="1156"/>
    </location>
</feature>
<feature type="modified residue" description="N6-acetyllysine" evidence="2">
    <location>
        <position position="1177"/>
    </location>
</feature>
<feature type="modified residue" description="Phosphoserine" evidence="2">
    <location>
        <position position="1207"/>
    </location>
</feature>
<feature type="modified residue" description="Phosphothreonine" evidence="2">
    <location>
        <position position="1215"/>
    </location>
</feature>
<feature type="modified residue" description="Phosphoserine" evidence="2">
    <location>
        <position position="1223"/>
    </location>
</feature>
<feature type="modified residue" description="Phosphoserine" evidence="2">
    <location>
        <position position="1302"/>
    </location>
</feature>
<feature type="modified residue" description="Phosphoserine" evidence="2">
    <location>
        <position position="1347"/>
    </location>
</feature>
<feature type="modified residue" description="Phosphoserine" evidence="2">
    <location>
        <position position="1403"/>
    </location>
</feature>
<feature type="modified residue" description="Phosphoserine" evidence="2">
    <location>
        <position position="1433"/>
    </location>
</feature>
<feature type="modified residue" description="Phosphothreonine" evidence="2">
    <location>
        <position position="1440"/>
    </location>
</feature>
<feature type="modified residue" description="Phosphothreonine; by MAPK1 or MAPK3" evidence="2">
    <location>
        <position position="1457"/>
    </location>
</feature>
<feature type="modified residue" description="Phosphoserine" evidence="2">
    <location>
        <position position="1463"/>
    </location>
</feature>
<feature type="modified residue" description="Phosphoserine" evidence="3">
    <location>
        <position position="1465"/>
    </location>
</feature>
<feature type="modified residue" description="Phosphoserine" evidence="2">
    <location>
        <position position="1479"/>
    </location>
</feature>
<feature type="modified residue" description="Phosphoserine" evidence="2">
    <location>
        <position position="1481"/>
    </location>
</feature>
<feature type="modified residue" description="Phosphoserine" evidence="2">
    <location>
        <position position="1482"/>
    </location>
</feature>
<feature type="modified residue" description="N6-acetyllysine" evidence="2">
    <location>
        <position position="1529"/>
    </location>
</feature>
<organism>
    <name type="scientific">Pongo abelii</name>
    <name type="common">Sumatran orangutan</name>
    <name type="synonym">Pongo pygmaeus abelii</name>
    <dbReference type="NCBI Taxonomy" id="9601"/>
    <lineage>
        <taxon>Eukaryota</taxon>
        <taxon>Metazoa</taxon>
        <taxon>Chordata</taxon>
        <taxon>Craniata</taxon>
        <taxon>Vertebrata</taxon>
        <taxon>Euteleostomi</taxon>
        <taxon>Mammalia</taxon>
        <taxon>Eutheria</taxon>
        <taxon>Euarchontoglires</taxon>
        <taxon>Primates</taxon>
        <taxon>Haplorrhini</taxon>
        <taxon>Catarrhini</taxon>
        <taxon>Hominidae</taxon>
        <taxon>Pongo</taxon>
    </lineage>
</organism>
<accession>Q5RES4</accession>
<evidence type="ECO:0000250" key="1"/>
<evidence type="ECO:0000250" key="2">
    <source>
        <dbReference type="UniProtKB" id="Q15648"/>
    </source>
</evidence>
<evidence type="ECO:0000250" key="3">
    <source>
        <dbReference type="UniProtKB" id="Q925J9"/>
    </source>
</evidence>
<evidence type="ECO:0000256" key="4">
    <source>
        <dbReference type="SAM" id="MobiDB-lite"/>
    </source>
</evidence>
<evidence type="ECO:0000305" key="5"/>
<sequence length="1581" mass="168583">MKAQGETEESEKLSKMSSLLERLHAKFNQNRPWSETIKLVRQVMEKRVVMSSGGHQHLVSCLETLQKALKVTSLPAMTDRLESIARQNGLGSHLSASGTECYITSDMFYVEVQLDPAGQLCDVKVAHHGENPVSCLELVQQLREKNFDEFSKHLKGLVNLYNLPGDNKLKTKMYLALQSLEQDLSKMAIMYWKATNAGPLDKILHGSVGYLTPRSGGHLMNLKYYVSPSDLLDDKTASPIILHENNVSRSLGMNASVTIEGTSAMYKLPIAPLIMGSHPVDNKWTPSFSSITSANSVDLPACFFLKFPQPIPVSRAFVQKLQNCTGIPLFETQPTYAPLYELITQFELSKDPDPIPLNHNMRFYAALPGQQHCYFLNKDAPLPDGRSLQGTLISKITFQHPGRVPLILNLIRHQVAYNTLIGSCVKRTILKEDSPGLLQFEVCPLSESRFSVSFQHPVNDSLVCVVMDVQDSTHVSCKLYKGLSDALICTDDFIAKVVQRCMSIPVTMRAIRRKAETIQADTPALSLIAETVEDMVKKNLPPASSPGYGMTTGSNPMSGTTTPTNTFPGGPITTLFNMSMSIKDRHESVGHGEDFSKVSQNPILTSLLQITGNGGSTIGSSPTPPHHTPPPVSSMAGNTKNHPMLMNLLKDNPAQDFSTLYGSSPLERQNSSSGSPRMEICSGSNKTKKKESSRLPPEKPKHQTEDDFQRELFSMDVDSQNPIFDVNMTADTLDTPHITPAPSQCSTPTTYPQPVPHPQPSIQRMVRLSSSDSIGPDVTDILSDIAEEASKLPSTSDDCPAIGTPLRDSSSSGHSQSTLFDSDVFQTNNNENPYTDPADLIADAAGSPSSDSPTNHFFHDGVDFNPDLSNSQSQSGFGEEYFDESSQSGDNDDFKGFASQALNTLGVPMLGGDNGETKFKGNNQADTVDFSIISVAGKALAPADLMEHHSGSQGSLLTTGDLGKEKTQKRVKEGNGTSNSTLSGPGLDSKPGKRSRTPSNDGKSKDKPPKRKKADTEGKSPSHSSSNRPFTPPTSTGGSKSPGSSGRSQTPPGVATPPIPKITIQIPKGTVMVGKPSSHSQYTSSGSVSSSGSKSHHSHSSSSSSSSASTSRKMKSSKSEGSSSSKLSSSMYSSQGSSGSSQSKNSSQSGGKPGSSPITKHGLSSGSSSTKMKPQGKPSSLMNPSLSKPNISPSHSRPPGGSDKLASPMKPVPGTPPSSKAKSPISSGSGGSHMSGTSSSSGMKSSSGLGSSGSLSQKTPPSSNSCTASSSSFSSSGSSMSSSQNQHGSSKGKSPSRNKKPSLTAVIDKLKHGVVTSGPGGEDPLDGQMGVSTNSSSHPMSSKHNMSGGEFQGKREKSDKDKSKVSTSGSSVDSSKKTSESKNVGSTGVAKIIISKHDGGSPSIKAKVTLQKPGESSGEGLRPQMASSKNYGSPLISGSTPKHERGSPSHSKSPAYTPQNLDSESESGSSIAEKSYQNSPSSDDGIRPLPEYSTEKHKKHKKEKKKVKDKDRDRDRDKDRDKKKSHSIKPESWSKSPISSDQSLSMTSNTILSADRPSRLSPDFMIGEEDDDLMDVALIGN</sequence>
<comment type="function">
    <text evidence="2">Component of the Mediator complex, a coactivator involved in the regulated transcription of nearly all RNA polymerase II-dependent genes. Mediator functions as a bridge to convey information from gene-specific regulatory proteins to the basal RNA polymerase II transcription machinery. Mediator is recruited to promoters by direct interactions with regulatory proteins and serves as a scaffold for the assembly of a functional preinitiation complex with RNA polymerase II and the general transcription factors. Acts as a coactivator for GATA1-mediated transcriptional activation during erythroid differentiation of K562 erythroleukemia cells (By similarity).</text>
</comment>
<comment type="subunit">
    <text evidence="2 3">Component of the Mediator complex, which is composed of MED1, MED4, MED6, MED7, MED8, MED9, MED10, MED11, MED12, MED13, MED13L, MED14, MED15, MED16, MED17, MED18, MED19, MED20, MED21, MED22, MED23, MED24, MED25, MED26, MED27, MED29, MED30, MED31, CCNC, CDK8 and CDC2L6/CDK11. The MED12, MED13, CCNC and CDK8 subunits form a distinct module termed the CDK8 module. Mediator containing the CDK8 module is less active than Mediator lacking this module in supporting transcriptional activation. Individual preparations of the Mediator complex lacking one or more distinct subunits have been variously termed ARC, CRSP, DRIP, PC2, SMCC and TRAP. This subunit specifically interacts with a number of nuclear receptors in a ligand-dependent fashion including AR, ESR1, ESR2, PPARA, PPARG, RORA, RXRA, RXRG, THRA, THRB and VDR. Interacts with CTNNB1, GABPA, GLI3, PPARGC1A and TP53. Interacts with GATA1 and YWHAH. Interacts with CLOCK; this interaction requires the presence of THRAP3. Interacts with CCAR1. Interacts with NR4A3 (By similarity). Interacts (via IBM motif) with PSIP1 (via IBD domain); phosphorylation increases its affinity for PSIP1 (By similarity). Interacts with USP22 (By similarity).</text>
</comment>
<comment type="subcellular location">
    <subcellularLocation>
        <location evidence="1">Nucleus</location>
    </subcellularLocation>
    <text evidence="1">A subset of the protein may enter the nucleolus subsequent to phosphorylation by MAPK1 or MAPK3.</text>
</comment>
<comment type="PTM">
    <text evidence="2">Phosphorylated by MAPK1 or MAPK3 during G2/M phase which may enhance protein stability and promote entry into the nucleolus (By similarity). Phosphorylation increases its interaction with PSIP1 (By similarity).</text>
</comment>
<comment type="similarity">
    <text evidence="5">Belongs to the Mediator complex subunit 1 family.</text>
</comment>
<protein>
    <recommendedName>
        <fullName>Mediator of RNA polymerase II transcription subunit 1</fullName>
    </recommendedName>
    <alternativeName>
        <fullName>Mediator complex subunit 1</fullName>
    </alternativeName>
    <alternativeName>
        <fullName>Peroxisome proliferator-activated receptor-binding protein</fullName>
        <shortName>PBP</shortName>
        <shortName>PPAR-binding protein</shortName>
    </alternativeName>
</protein>
<proteinExistence type="evidence at transcript level"/>
<keyword id="KW-0007">Acetylation</keyword>
<keyword id="KW-0010">Activator</keyword>
<keyword id="KW-0238">DNA-binding</keyword>
<keyword id="KW-0539">Nucleus</keyword>
<keyword id="KW-0597">Phosphoprotein</keyword>
<keyword id="KW-1185">Reference proteome</keyword>
<keyword id="KW-0804">Transcription</keyword>
<keyword id="KW-0805">Transcription regulation</keyword>
<reference key="1">
    <citation type="submission" date="2004-11" db="EMBL/GenBank/DDBJ databases">
        <authorList>
            <consortium name="The German cDNA consortium"/>
        </authorList>
    </citation>
    <scope>NUCLEOTIDE SEQUENCE [LARGE SCALE MRNA]</scope>
    <source>
        <tissue>Kidney</tissue>
    </source>
</reference>
<dbReference type="EMBL" id="CR857442">
    <property type="protein sequence ID" value="CAH89733.1"/>
    <property type="molecule type" value="mRNA"/>
</dbReference>
<dbReference type="SMR" id="Q5RES4"/>
<dbReference type="FunCoup" id="Q5RES4">
    <property type="interactions" value="4087"/>
</dbReference>
<dbReference type="STRING" id="9601.ENSPPYP00000009539"/>
<dbReference type="eggNOG" id="ENOG502QPZ7">
    <property type="taxonomic scope" value="Eukaryota"/>
</dbReference>
<dbReference type="InParanoid" id="Q5RES4"/>
<dbReference type="Proteomes" id="UP000001595">
    <property type="component" value="Unplaced"/>
</dbReference>
<dbReference type="GO" id="GO:0016592">
    <property type="term" value="C:mediator complex"/>
    <property type="evidence" value="ECO:0007669"/>
    <property type="project" value="InterPro"/>
</dbReference>
<dbReference type="GO" id="GO:0003677">
    <property type="term" value="F:DNA binding"/>
    <property type="evidence" value="ECO:0007669"/>
    <property type="project" value="UniProtKB-KW"/>
</dbReference>
<dbReference type="GO" id="GO:0042974">
    <property type="term" value="F:nuclear retinoic acid receptor binding"/>
    <property type="evidence" value="ECO:0007669"/>
    <property type="project" value="TreeGrafter"/>
</dbReference>
<dbReference type="GO" id="GO:0046966">
    <property type="term" value="F:nuclear thyroid hormone receptor binding"/>
    <property type="evidence" value="ECO:0007669"/>
    <property type="project" value="TreeGrafter"/>
</dbReference>
<dbReference type="GO" id="GO:0042809">
    <property type="term" value="F:nuclear vitamin D receptor binding"/>
    <property type="evidence" value="ECO:0007669"/>
    <property type="project" value="TreeGrafter"/>
</dbReference>
<dbReference type="GO" id="GO:0003712">
    <property type="term" value="F:transcription coregulator activity"/>
    <property type="evidence" value="ECO:0007669"/>
    <property type="project" value="InterPro"/>
</dbReference>
<dbReference type="GO" id="GO:0097067">
    <property type="term" value="P:cellular response to thyroid hormone stimulus"/>
    <property type="evidence" value="ECO:0007669"/>
    <property type="project" value="TreeGrafter"/>
</dbReference>
<dbReference type="GO" id="GO:0045648">
    <property type="term" value="P:positive regulation of erythrocyte differentiation"/>
    <property type="evidence" value="ECO:0000250"/>
    <property type="project" value="UniProtKB"/>
</dbReference>
<dbReference type="GO" id="GO:0045944">
    <property type="term" value="P:positive regulation of transcription by RNA polymerase II"/>
    <property type="evidence" value="ECO:0007669"/>
    <property type="project" value="UniProtKB-ARBA"/>
</dbReference>
<dbReference type="InterPro" id="IPR051999">
    <property type="entry name" value="Mediator_complex_subunit_1"/>
</dbReference>
<dbReference type="InterPro" id="IPR019680">
    <property type="entry name" value="Mediator_Med1"/>
</dbReference>
<dbReference type="PANTHER" id="PTHR12881">
    <property type="entry name" value="MEDIATOR OF RNA POLYMERASE II TRANSCRIPTION SUBUNIT 1"/>
    <property type="match status" value="1"/>
</dbReference>
<dbReference type="PANTHER" id="PTHR12881:SF10">
    <property type="entry name" value="MEDIATOR OF RNA POLYMERASE II TRANSCRIPTION SUBUNIT 1"/>
    <property type="match status" value="1"/>
</dbReference>
<dbReference type="Pfam" id="PF10744">
    <property type="entry name" value="Med1"/>
    <property type="match status" value="1"/>
</dbReference>